<feature type="chain" id="PRO_1000034276" description="Transcription elongation factor GreA">
    <location>
        <begin position="1"/>
        <end position="156"/>
    </location>
</feature>
<feature type="coiled-coil region" evidence="1">
    <location>
        <begin position="2"/>
        <end position="78"/>
    </location>
</feature>
<protein>
    <recommendedName>
        <fullName evidence="1">Transcription elongation factor GreA</fullName>
    </recommendedName>
    <alternativeName>
        <fullName evidence="1">Transcript cleavage factor GreA</fullName>
    </alternativeName>
</protein>
<evidence type="ECO:0000255" key="1">
    <source>
        <dbReference type="HAMAP-Rule" id="MF_00105"/>
    </source>
</evidence>
<proteinExistence type="inferred from homology"/>
<gene>
    <name evidence="1" type="primary">greA</name>
    <name type="ordered locus">Mfl102</name>
</gene>
<reference key="1">
    <citation type="submission" date="2004-06" db="EMBL/GenBank/DDBJ databases">
        <authorList>
            <person name="Birren B.W."/>
            <person name="Stange-Thomann N."/>
            <person name="Hafez N."/>
            <person name="DeCaprio D."/>
            <person name="Fisher S."/>
            <person name="Butler J."/>
            <person name="Elkins T."/>
            <person name="Kodira C.D."/>
            <person name="Major J."/>
            <person name="Wang S."/>
            <person name="Nicol R."/>
            <person name="Nusbaum C."/>
        </authorList>
    </citation>
    <scope>NUCLEOTIDE SEQUENCE [LARGE SCALE GENOMIC DNA]</scope>
    <source>
        <strain>ATCC 33453 / NBRC 100688 / NCTC 11704 / L1</strain>
    </source>
</reference>
<sequence>MAKEIILTQEGIEELKHELKHLLEVVRPQVIEELVEARNQGDLSENADYDAARNRQAEVEARIKELETMISKAKLIEDSSTTDGAIKIGSKVKFIMLNTKQTREVKIVGAVEADPFKGLISNESPIAKAILGKKVGESVEVKDINAPYSIEIKEVN</sequence>
<dbReference type="EMBL" id="AE017263">
    <property type="protein sequence ID" value="AAT75458.1"/>
    <property type="molecule type" value="Genomic_DNA"/>
</dbReference>
<dbReference type="RefSeq" id="WP_011182999.1">
    <property type="nucleotide sequence ID" value="NC_006055.1"/>
</dbReference>
<dbReference type="RefSeq" id="YP_053342.1">
    <property type="nucleotide sequence ID" value="NC_006055.1"/>
</dbReference>
<dbReference type="SMR" id="Q6F215"/>
<dbReference type="STRING" id="265311.Mfl102"/>
<dbReference type="PaxDb" id="265311-Mfl102"/>
<dbReference type="EnsemblBacteria" id="AAT75458">
    <property type="protein sequence ID" value="AAT75458"/>
    <property type="gene ID" value="Mfl102"/>
</dbReference>
<dbReference type="GeneID" id="2897868"/>
<dbReference type="KEGG" id="mfl:Mfl102"/>
<dbReference type="PATRIC" id="fig|265311.5.peg.103"/>
<dbReference type="eggNOG" id="COG0782">
    <property type="taxonomic scope" value="Bacteria"/>
</dbReference>
<dbReference type="HOGENOM" id="CLU_101379_2_1_14"/>
<dbReference type="OrthoDB" id="9808774at2"/>
<dbReference type="Proteomes" id="UP000006647">
    <property type="component" value="Chromosome"/>
</dbReference>
<dbReference type="GO" id="GO:0003677">
    <property type="term" value="F:DNA binding"/>
    <property type="evidence" value="ECO:0007669"/>
    <property type="project" value="UniProtKB-UniRule"/>
</dbReference>
<dbReference type="GO" id="GO:0070063">
    <property type="term" value="F:RNA polymerase binding"/>
    <property type="evidence" value="ECO:0007669"/>
    <property type="project" value="InterPro"/>
</dbReference>
<dbReference type="GO" id="GO:0006354">
    <property type="term" value="P:DNA-templated transcription elongation"/>
    <property type="evidence" value="ECO:0007669"/>
    <property type="project" value="TreeGrafter"/>
</dbReference>
<dbReference type="GO" id="GO:0032784">
    <property type="term" value="P:regulation of DNA-templated transcription elongation"/>
    <property type="evidence" value="ECO:0007669"/>
    <property type="project" value="UniProtKB-UniRule"/>
</dbReference>
<dbReference type="FunFam" id="1.10.287.180:FF:000001">
    <property type="entry name" value="Transcription elongation factor GreA"/>
    <property type="match status" value="1"/>
</dbReference>
<dbReference type="Gene3D" id="3.10.50.30">
    <property type="entry name" value="Transcription elongation factor, GreA/GreB, C-terminal domain"/>
    <property type="match status" value="1"/>
</dbReference>
<dbReference type="Gene3D" id="1.10.287.180">
    <property type="entry name" value="Transcription elongation factor, GreA/GreB, N-terminal domain"/>
    <property type="match status" value="1"/>
</dbReference>
<dbReference type="HAMAP" id="MF_00105">
    <property type="entry name" value="GreA_GreB"/>
    <property type="match status" value="1"/>
</dbReference>
<dbReference type="InterPro" id="IPR036953">
    <property type="entry name" value="GreA/GreB_C_sf"/>
</dbReference>
<dbReference type="InterPro" id="IPR018151">
    <property type="entry name" value="TF_GreA/GreB_CS"/>
</dbReference>
<dbReference type="InterPro" id="IPR006359">
    <property type="entry name" value="Tscrpt_elong_fac_GreA"/>
</dbReference>
<dbReference type="InterPro" id="IPR028624">
    <property type="entry name" value="Tscrpt_elong_fac_GreA/B"/>
</dbReference>
<dbReference type="InterPro" id="IPR001437">
    <property type="entry name" value="Tscrpt_elong_fac_GreA/B_C"/>
</dbReference>
<dbReference type="InterPro" id="IPR023459">
    <property type="entry name" value="Tscrpt_elong_fac_GreA/B_fam"/>
</dbReference>
<dbReference type="InterPro" id="IPR022691">
    <property type="entry name" value="Tscrpt_elong_fac_GreA/B_N"/>
</dbReference>
<dbReference type="InterPro" id="IPR036805">
    <property type="entry name" value="Tscrpt_elong_fac_GreA/B_N_sf"/>
</dbReference>
<dbReference type="NCBIfam" id="TIGR01462">
    <property type="entry name" value="greA"/>
    <property type="match status" value="1"/>
</dbReference>
<dbReference type="NCBIfam" id="NF001263">
    <property type="entry name" value="PRK00226.1-4"/>
    <property type="match status" value="1"/>
</dbReference>
<dbReference type="PANTHER" id="PTHR30437">
    <property type="entry name" value="TRANSCRIPTION ELONGATION FACTOR GREA"/>
    <property type="match status" value="1"/>
</dbReference>
<dbReference type="PANTHER" id="PTHR30437:SF4">
    <property type="entry name" value="TRANSCRIPTION ELONGATION FACTOR GREA"/>
    <property type="match status" value="1"/>
</dbReference>
<dbReference type="Pfam" id="PF01272">
    <property type="entry name" value="GreA_GreB"/>
    <property type="match status" value="1"/>
</dbReference>
<dbReference type="Pfam" id="PF03449">
    <property type="entry name" value="GreA_GreB_N"/>
    <property type="match status" value="1"/>
</dbReference>
<dbReference type="PIRSF" id="PIRSF006092">
    <property type="entry name" value="GreA_GreB"/>
    <property type="match status" value="1"/>
</dbReference>
<dbReference type="SUPFAM" id="SSF54534">
    <property type="entry name" value="FKBP-like"/>
    <property type="match status" value="1"/>
</dbReference>
<dbReference type="SUPFAM" id="SSF46557">
    <property type="entry name" value="GreA transcript cleavage protein, N-terminal domain"/>
    <property type="match status" value="1"/>
</dbReference>
<dbReference type="PROSITE" id="PS00829">
    <property type="entry name" value="GREAB_1"/>
    <property type="match status" value="1"/>
</dbReference>
<dbReference type="PROSITE" id="PS00830">
    <property type="entry name" value="GREAB_2"/>
    <property type="match status" value="1"/>
</dbReference>
<comment type="function">
    <text evidence="1">Necessary for efficient RNA polymerase transcription elongation past template-encoded arresting sites. The arresting sites in DNA have the property of trapping a certain fraction of elongating RNA polymerases that pass through, resulting in locked ternary complexes. Cleavage of the nascent transcript by cleavage factors such as GreA or GreB allows the resumption of elongation from the new 3'terminus. GreA releases sequences of 2 to 3 nucleotides.</text>
</comment>
<comment type="similarity">
    <text evidence="1">Belongs to the GreA/GreB family.</text>
</comment>
<accession>Q6F215</accession>
<organism>
    <name type="scientific">Mesoplasma florum (strain ATCC 33453 / NBRC 100688 / NCTC 11704 / L1)</name>
    <name type="common">Acholeplasma florum</name>
    <dbReference type="NCBI Taxonomy" id="265311"/>
    <lineage>
        <taxon>Bacteria</taxon>
        <taxon>Bacillati</taxon>
        <taxon>Mycoplasmatota</taxon>
        <taxon>Mollicutes</taxon>
        <taxon>Entomoplasmatales</taxon>
        <taxon>Entomoplasmataceae</taxon>
        <taxon>Mesoplasma</taxon>
    </lineage>
</organism>
<keyword id="KW-0175">Coiled coil</keyword>
<keyword id="KW-0238">DNA-binding</keyword>
<keyword id="KW-1185">Reference proteome</keyword>
<keyword id="KW-0804">Transcription</keyword>
<keyword id="KW-0805">Transcription regulation</keyword>
<name>GREA_MESFL</name>